<proteinExistence type="evidence at transcript level"/>
<protein>
    <recommendedName>
        <fullName evidence="4">SusD-like protein P2</fullName>
        <shortName evidence="4">P2_SusD</shortName>
    </recommendedName>
    <alternativeName>
        <fullName evidence="4">Polysaccharide utilization locus H protein P2</fullName>
        <shortName>PUL H protein P2</shortName>
    </alternativeName>
</protein>
<gene>
    <name type="ORF">BN863_21910</name>
</gene>
<name>PLH2_FORAG</name>
<sequence>MKKYKITFIVLLLTLVGCSDLEENPVGILAPESFFKTTADLQAAINGSYASMSTESFWGRKLTLTLLLRGDLADIGDQGTSGRRKEVNNFTMGDDNGMVSAFWPQAYAIIGTANQAISNAGLINDDENKVNAVAAQAYFCRAFTYYHLVRLFGDIPYIDFAVSDASEIDAISKTPENEVYEGIIADLQYAKEWLPDTQFSRALPSKATAAAYLASVYLTRGDFQKAAEEAQFVINNEARFDLRLEPDFQNLFDANQTAGLKEPLFTIDYMGQISSSGYGQDYVASVTGIRGDATHEYGEGWSVAVPSLKVYQDWDAKDYRRAVSLDTTATSKSGEVYPYTQFEEYSDLAVNRPHIAKYYRYAGLAGNNGRESSTNYIPMRYAEVLLIAAEALNEISAGSSEAVSYVNRLRERARLGSGSMHPLNISEGLLQDELRNIIIEERKIELAFEFKRWYDIKRLKLGNEVFGPNGLEPQPNFDANRDYLLPLPGPELVRNSNLMPNNPGY</sequence>
<organism>
    <name type="scientific">Formosa agariphila (strain DSM 15362 / KCTC 12365 / LMG 23005 / KMM 3901 / M-2Alg 35-1)</name>
    <dbReference type="NCBI Taxonomy" id="1347342"/>
    <lineage>
        <taxon>Bacteria</taxon>
        <taxon>Pseudomonadati</taxon>
        <taxon>Bacteroidota</taxon>
        <taxon>Flavobacteriia</taxon>
        <taxon>Flavobacteriales</taxon>
        <taxon>Flavobacteriaceae</taxon>
        <taxon>Formosa</taxon>
    </lineage>
</organism>
<reference key="1">
    <citation type="journal article" date="2013" name="Appl. Environ. Microbiol.">
        <title>The genome of the alga-associated marine flavobacterium Formosa agariphila KMM 3901T reveals a broad potential for degradation of algal polysaccharides.</title>
        <authorList>
            <person name="Mann A.J."/>
            <person name="Hahnke R.L."/>
            <person name="Huang S."/>
            <person name="Werner J."/>
            <person name="Xing P."/>
            <person name="Barbeyron T."/>
            <person name="Huettel B."/>
            <person name="Stueber K."/>
            <person name="Reinhardt R."/>
            <person name="Harder J."/>
            <person name="Gloeckner F.O."/>
            <person name="Amann R.I."/>
            <person name="Teeling H."/>
        </authorList>
    </citation>
    <scope>NUCLEOTIDE SEQUENCE [LARGE SCALE GENOMIC DNA]</scope>
    <source>
        <strain>DSM 15362 / KCTC 12365 / LMG 23005 / KMM 3901 / M-2Alg 35-1</strain>
    </source>
</reference>
<reference key="2">
    <citation type="journal article" date="2019" name="Nat. Chem. Biol.">
        <title>A marine bacterial enzymatic cascade degrades the algal polysaccharide ulvan.</title>
        <authorList>
            <person name="Reisky L."/>
            <person name="Prechoux A."/>
            <person name="Zuehlke M.K."/>
            <person name="Baeumgen M."/>
            <person name="Robb C.S."/>
            <person name="Gerlach N."/>
            <person name="Roret T."/>
            <person name="Stanetty C."/>
            <person name="Larocque R."/>
            <person name="Michel G."/>
            <person name="Song T."/>
            <person name="Markert S."/>
            <person name="Unfried F."/>
            <person name="Mihovilovic M.D."/>
            <person name="Trautwein-Schult A."/>
            <person name="Becher D."/>
            <person name="Schweder T."/>
            <person name="Bornscheuer U.T."/>
            <person name="Hehemann J.H."/>
        </authorList>
    </citation>
    <scope>FUNCTION</scope>
    <scope>SUBCELLULAR LOCATION</scope>
    <scope>INDUCTION</scope>
</reference>
<dbReference type="EMBL" id="HG315671">
    <property type="protein sequence ID" value="CDF79903.1"/>
    <property type="molecule type" value="Genomic_DNA"/>
</dbReference>
<dbReference type="RefSeq" id="WP_038530477.1">
    <property type="nucleotide sequence ID" value="NZ_HG315671.1"/>
</dbReference>
<dbReference type="SMR" id="T2KN63"/>
<dbReference type="STRING" id="1347342.BN863_21910"/>
<dbReference type="PATRIC" id="fig|1347342.6.peg.2198"/>
<dbReference type="eggNOG" id="COG0702">
    <property type="taxonomic scope" value="Bacteria"/>
</dbReference>
<dbReference type="HOGENOM" id="CLU_015553_1_4_10"/>
<dbReference type="OrthoDB" id="5694214at2"/>
<dbReference type="Proteomes" id="UP000016160">
    <property type="component" value="Chromosome"/>
</dbReference>
<dbReference type="GO" id="GO:0009279">
    <property type="term" value="C:cell outer membrane"/>
    <property type="evidence" value="ECO:0007669"/>
    <property type="project" value="UniProtKB-SubCell"/>
</dbReference>
<dbReference type="Gene3D" id="1.25.40.390">
    <property type="match status" value="1"/>
</dbReference>
<dbReference type="InterPro" id="IPR033985">
    <property type="entry name" value="SusD-like_N"/>
</dbReference>
<dbReference type="InterPro" id="IPR012944">
    <property type="entry name" value="SusD_RagB_dom"/>
</dbReference>
<dbReference type="InterPro" id="IPR011990">
    <property type="entry name" value="TPR-like_helical_dom_sf"/>
</dbReference>
<dbReference type="Pfam" id="PF14322">
    <property type="entry name" value="SusD-like_3"/>
    <property type="match status" value="1"/>
</dbReference>
<dbReference type="Pfam" id="PF07980">
    <property type="entry name" value="SusD_RagB"/>
    <property type="match status" value="1"/>
</dbReference>
<dbReference type="SUPFAM" id="SSF48452">
    <property type="entry name" value="TPR-like"/>
    <property type="match status" value="1"/>
</dbReference>
<dbReference type="PROSITE" id="PS51257">
    <property type="entry name" value="PROKAR_LIPOPROTEIN"/>
    <property type="match status" value="1"/>
</dbReference>
<evidence type="ECO:0000250" key="1">
    <source>
        <dbReference type="UniProtKB" id="Q8A1G2"/>
    </source>
</evidence>
<evidence type="ECO:0000255" key="2">
    <source>
        <dbReference type="PROSITE-ProRule" id="PRU00303"/>
    </source>
</evidence>
<evidence type="ECO:0000269" key="3">
    <source>
    </source>
</evidence>
<evidence type="ECO:0000303" key="4">
    <source>
    </source>
</evidence>
<evidence type="ECO:0000305" key="5"/>
<evidence type="ECO:0000305" key="6">
    <source>
    </source>
</evidence>
<keyword id="KW-0998">Cell outer membrane</keyword>
<keyword id="KW-0449">Lipoprotein</keyword>
<keyword id="KW-0472">Membrane</keyword>
<keyword id="KW-0564">Palmitate</keyword>
<keyword id="KW-1185">Reference proteome</keyword>
<keyword id="KW-0732">Signal</keyword>
<feature type="signal peptide" evidence="2">
    <location>
        <begin position="1"/>
        <end position="17"/>
    </location>
</feature>
<feature type="chain" id="PRO_0000448316" description="SusD-like protein P2">
    <location>
        <begin position="18"/>
        <end position="505"/>
    </location>
</feature>
<feature type="lipid moiety-binding region" description="N-palmitoyl cysteine" evidence="2">
    <location>
        <position position="18"/>
    </location>
</feature>
<feature type="lipid moiety-binding region" description="S-diacylglycerol cysteine" evidence="2">
    <location>
        <position position="18"/>
    </location>
</feature>
<accession>T2KN63</accession>
<comment type="function">
    <text evidence="1 6">Polysaccharide-binding protein probably involved in ulvan degradation (Probable). Ulvan is the main polysaccharide component of the Ulvales (green seaweed) cell wall. It is composed of disaccharide building blocks comprising 3-sulfated rhamnose (Rha3S) linked to D-glucuronic acid (GlcA), L-iduronic acid (IduA), or D-xylose (Xyl) (Probable). The SusD-like protein may mediate ulvan oligomer-binding before transport in the periplasm for further degradation (By similarity).</text>
</comment>
<comment type="subcellular location">
    <subcellularLocation>
        <location evidence="3">Cell outer membrane</location>
        <topology evidence="2">Lipid-anchor</topology>
    </subcellularLocation>
</comment>
<comment type="induction">
    <text evidence="3">By ulvan and rhamnose.</text>
</comment>
<comment type="similarity">
    <text evidence="5">Belongs to the SusD family.</text>
</comment>